<protein>
    <recommendedName>
        <fullName evidence="1">Putative tRNA (cytidine(34)-2'-O)-methyltransferase</fullName>
        <ecNumber evidence="1">2.1.1.207</ecNumber>
    </recommendedName>
    <alternativeName>
        <fullName evidence="1">tRNA (cytidine/uridine-2'-O-)-methyltransferase</fullName>
    </alternativeName>
</protein>
<evidence type="ECO:0000255" key="1">
    <source>
        <dbReference type="HAMAP-Rule" id="MF_01885"/>
    </source>
</evidence>
<comment type="function">
    <text evidence="1">Could methylate the ribose at the nucleotide 34 wobble position in tRNA.</text>
</comment>
<comment type="catalytic activity">
    <reaction evidence="1">
        <text>cytidine(34) in tRNA + S-adenosyl-L-methionine = 2'-O-methylcytidine(34) in tRNA + S-adenosyl-L-homocysteine + H(+)</text>
        <dbReference type="Rhea" id="RHEA:43084"/>
        <dbReference type="Rhea" id="RHEA-COMP:10331"/>
        <dbReference type="Rhea" id="RHEA-COMP:10332"/>
        <dbReference type="ChEBI" id="CHEBI:15378"/>
        <dbReference type="ChEBI" id="CHEBI:57856"/>
        <dbReference type="ChEBI" id="CHEBI:59789"/>
        <dbReference type="ChEBI" id="CHEBI:74495"/>
        <dbReference type="ChEBI" id="CHEBI:82748"/>
        <dbReference type="EC" id="2.1.1.207"/>
    </reaction>
</comment>
<comment type="catalytic activity">
    <reaction evidence="1">
        <text>5-carboxymethylaminomethyluridine(34) in tRNA(Leu) + S-adenosyl-L-methionine = 5-carboxymethylaminomethyl-2'-O-methyluridine(34) in tRNA(Leu) + S-adenosyl-L-homocysteine + H(+)</text>
        <dbReference type="Rhea" id="RHEA:43088"/>
        <dbReference type="Rhea" id="RHEA-COMP:10333"/>
        <dbReference type="Rhea" id="RHEA-COMP:10334"/>
        <dbReference type="ChEBI" id="CHEBI:15378"/>
        <dbReference type="ChEBI" id="CHEBI:57856"/>
        <dbReference type="ChEBI" id="CHEBI:59789"/>
        <dbReference type="ChEBI" id="CHEBI:74508"/>
        <dbReference type="ChEBI" id="CHEBI:74511"/>
        <dbReference type="EC" id="2.1.1.207"/>
    </reaction>
</comment>
<comment type="subcellular location">
    <subcellularLocation>
        <location evidence="1">Cytoplasm</location>
    </subcellularLocation>
</comment>
<comment type="similarity">
    <text evidence="1">Belongs to the class IV-like SAM-binding methyltransferase superfamily. RNA methyltransferase TrmH family. TrmL subfamily.</text>
</comment>
<gene>
    <name type="ordered locus">MPN_521</name>
    <name type="ORF">G12_orf166b</name>
    <name type="ORF">MP321</name>
</gene>
<name>TRML_MYCPN</name>
<reference key="1">
    <citation type="journal article" date="1996" name="Nucleic Acids Res.">
        <title>Complete sequence analysis of the genome of the bacterium Mycoplasma pneumoniae.</title>
        <authorList>
            <person name="Himmelreich R."/>
            <person name="Hilbert H."/>
            <person name="Plagens H."/>
            <person name="Pirkl E."/>
            <person name="Li B.-C."/>
            <person name="Herrmann R."/>
        </authorList>
    </citation>
    <scope>NUCLEOTIDE SEQUENCE [LARGE SCALE GENOMIC DNA]</scope>
    <source>
        <strain>ATCC 29342 / M129 / Subtype 1</strain>
    </source>
</reference>
<sequence>MYKSAINIVLFCPEIPNNTGNIVRSCTAFKANLHLIKPYGFFLNDKRMVRAGLNCWDKVQMFEHKSWEHFIETTPPNKAIWLLTKSGTTTPDQINMQTDNREQLYFVFGQETKGLPQTLMEQYSQNQVRIPIWNPVRSINLSNTVACVLYEYAKQNHYFNLDKQCA</sequence>
<accession>P75257</accession>
<feature type="chain" id="PRO_0000159836" description="Putative tRNA (cytidine(34)-2'-O)-methyltransferase">
    <location>
        <begin position="1"/>
        <end position="166"/>
    </location>
</feature>
<feature type="binding site" evidence="1">
    <location>
        <position position="83"/>
    </location>
    <ligand>
        <name>S-adenosyl-L-methionine</name>
        <dbReference type="ChEBI" id="CHEBI:59789"/>
    </ligand>
</feature>
<feature type="binding site" evidence="1">
    <location>
        <position position="109"/>
    </location>
    <ligand>
        <name>S-adenosyl-L-methionine</name>
        <dbReference type="ChEBI" id="CHEBI:59789"/>
    </ligand>
</feature>
<feature type="binding site" evidence="1">
    <location>
        <position position="130"/>
    </location>
    <ligand>
        <name>S-adenosyl-L-methionine</name>
        <dbReference type="ChEBI" id="CHEBI:59789"/>
    </ligand>
</feature>
<feature type="binding site" evidence="1">
    <location>
        <position position="138"/>
    </location>
    <ligand>
        <name>S-adenosyl-L-methionine</name>
        <dbReference type="ChEBI" id="CHEBI:59789"/>
    </ligand>
</feature>
<organism>
    <name type="scientific">Mycoplasma pneumoniae (strain ATCC 29342 / M129 / Subtype 1)</name>
    <name type="common">Mycoplasmoides pneumoniae</name>
    <dbReference type="NCBI Taxonomy" id="272634"/>
    <lineage>
        <taxon>Bacteria</taxon>
        <taxon>Bacillati</taxon>
        <taxon>Mycoplasmatota</taxon>
        <taxon>Mycoplasmoidales</taxon>
        <taxon>Mycoplasmoidaceae</taxon>
        <taxon>Mycoplasmoides</taxon>
    </lineage>
</organism>
<keyword id="KW-0963">Cytoplasm</keyword>
<keyword id="KW-0489">Methyltransferase</keyword>
<keyword id="KW-1185">Reference proteome</keyword>
<keyword id="KW-0949">S-adenosyl-L-methionine</keyword>
<keyword id="KW-0808">Transferase</keyword>
<keyword id="KW-0819">tRNA processing</keyword>
<proteinExistence type="inferred from homology"/>
<dbReference type="EC" id="2.1.1.207" evidence="1"/>
<dbReference type="EMBL" id="U00089">
    <property type="protein sequence ID" value="AAB95969.1"/>
    <property type="molecule type" value="Genomic_DNA"/>
</dbReference>
<dbReference type="PIR" id="S73647">
    <property type="entry name" value="S73647"/>
</dbReference>
<dbReference type="RefSeq" id="NP_110209.1">
    <property type="nucleotide sequence ID" value="NC_000912.1"/>
</dbReference>
<dbReference type="SMR" id="P75257"/>
<dbReference type="IntAct" id="P75257">
    <property type="interactions" value="1"/>
</dbReference>
<dbReference type="STRING" id="272634.MPN_521"/>
<dbReference type="EnsemblBacteria" id="AAB95969">
    <property type="protein sequence ID" value="AAB95969"/>
    <property type="gene ID" value="MPN_521"/>
</dbReference>
<dbReference type="KEGG" id="mpn:MPN_521"/>
<dbReference type="PATRIC" id="fig|272634.6.peg.578"/>
<dbReference type="HOGENOM" id="CLU_110125_0_0_14"/>
<dbReference type="OrthoDB" id="9789043at2"/>
<dbReference type="BioCyc" id="MPNE272634:G1GJ3-856-MONOMER"/>
<dbReference type="Proteomes" id="UP000000808">
    <property type="component" value="Chromosome"/>
</dbReference>
<dbReference type="GO" id="GO:0005737">
    <property type="term" value="C:cytoplasm"/>
    <property type="evidence" value="ECO:0007669"/>
    <property type="project" value="UniProtKB-SubCell"/>
</dbReference>
<dbReference type="GO" id="GO:0003723">
    <property type="term" value="F:RNA binding"/>
    <property type="evidence" value="ECO:0007669"/>
    <property type="project" value="InterPro"/>
</dbReference>
<dbReference type="GO" id="GO:0141102">
    <property type="term" value="F:tRNA (5-carboxymethylaminomethyluridine(34)-2'-O)-methyltransferase activity"/>
    <property type="evidence" value="ECO:0007669"/>
    <property type="project" value="RHEA"/>
</dbReference>
<dbReference type="GO" id="GO:0141098">
    <property type="term" value="F:tRNA (cytidine(34)-2'-O)-methyltransferase activity"/>
    <property type="evidence" value="ECO:0007669"/>
    <property type="project" value="RHEA"/>
</dbReference>
<dbReference type="GO" id="GO:0002130">
    <property type="term" value="P:wobble position ribose methylation"/>
    <property type="evidence" value="ECO:0007669"/>
    <property type="project" value="TreeGrafter"/>
</dbReference>
<dbReference type="CDD" id="cd18094">
    <property type="entry name" value="SpoU-like_TrmL"/>
    <property type="match status" value="1"/>
</dbReference>
<dbReference type="FunFam" id="3.40.1280.10:FF:000052">
    <property type="entry name" value="Putative tRNA (cytidine(34)-2'-O)-methyltransferase"/>
    <property type="match status" value="1"/>
</dbReference>
<dbReference type="Gene3D" id="3.40.1280.10">
    <property type="match status" value="1"/>
</dbReference>
<dbReference type="HAMAP" id="MF_01885">
    <property type="entry name" value="tRNA_methyltr_TrmL"/>
    <property type="match status" value="1"/>
</dbReference>
<dbReference type="InterPro" id="IPR029028">
    <property type="entry name" value="Alpha/beta_knot_MTases"/>
</dbReference>
<dbReference type="InterPro" id="IPR001537">
    <property type="entry name" value="SpoU_MeTrfase"/>
</dbReference>
<dbReference type="InterPro" id="IPR016914">
    <property type="entry name" value="TrmL"/>
</dbReference>
<dbReference type="InterPro" id="IPR029026">
    <property type="entry name" value="tRNA_m1G_MTases_N"/>
</dbReference>
<dbReference type="NCBIfam" id="TIGR00185">
    <property type="entry name" value="tRNA_yibK_trmL"/>
    <property type="match status" value="1"/>
</dbReference>
<dbReference type="PANTHER" id="PTHR42971">
    <property type="entry name" value="TRNA (CYTIDINE(34)-2'-O)-METHYLTRANSFERASE"/>
    <property type="match status" value="1"/>
</dbReference>
<dbReference type="PANTHER" id="PTHR42971:SF1">
    <property type="entry name" value="TRNA (CYTIDINE(34)-2'-O)-METHYLTRANSFERASE"/>
    <property type="match status" value="1"/>
</dbReference>
<dbReference type="Pfam" id="PF00588">
    <property type="entry name" value="SpoU_methylase"/>
    <property type="match status" value="1"/>
</dbReference>
<dbReference type="PIRSF" id="PIRSF029256">
    <property type="entry name" value="SpoU_TrmH_prd"/>
    <property type="match status" value="1"/>
</dbReference>
<dbReference type="SUPFAM" id="SSF75217">
    <property type="entry name" value="alpha/beta knot"/>
    <property type="match status" value="1"/>
</dbReference>